<keyword id="KW-0067">ATP-binding</keyword>
<keyword id="KW-0997">Cell inner membrane</keyword>
<keyword id="KW-1003">Cell membrane</keyword>
<keyword id="KW-0472">Membrane</keyword>
<keyword id="KW-0547">Nucleotide-binding</keyword>
<keyword id="KW-1278">Translocase</keyword>
<keyword id="KW-0813">Transport</keyword>
<evidence type="ECO:0000255" key="1">
    <source>
        <dbReference type="HAMAP-Rule" id="MF_01724"/>
    </source>
</evidence>
<evidence type="ECO:0000256" key="2">
    <source>
        <dbReference type="SAM" id="MobiDB-lite"/>
    </source>
</evidence>
<dbReference type="EC" id="7.6.2.14" evidence="1"/>
<dbReference type="EMBL" id="CP000124">
    <property type="protein sequence ID" value="ABA49747.1"/>
    <property type="molecule type" value="Genomic_DNA"/>
</dbReference>
<dbReference type="RefSeq" id="WP_004526884.1">
    <property type="nucleotide sequence ID" value="NC_007434.1"/>
</dbReference>
<dbReference type="SMR" id="Q3JSR6"/>
<dbReference type="EnsemblBacteria" id="ABA49747">
    <property type="protein sequence ID" value="ABA49747"/>
    <property type="gene ID" value="BURPS1710b_1991"/>
</dbReference>
<dbReference type="KEGG" id="bpm:BURPS1710b_1991"/>
<dbReference type="HOGENOM" id="CLU_000604_1_22_4"/>
<dbReference type="Proteomes" id="UP000002700">
    <property type="component" value="Chromosome I"/>
</dbReference>
<dbReference type="GO" id="GO:0005886">
    <property type="term" value="C:plasma membrane"/>
    <property type="evidence" value="ECO:0007669"/>
    <property type="project" value="UniProtKB-SubCell"/>
</dbReference>
<dbReference type="GO" id="GO:0005524">
    <property type="term" value="F:ATP binding"/>
    <property type="evidence" value="ECO:0007669"/>
    <property type="project" value="UniProtKB-KW"/>
</dbReference>
<dbReference type="GO" id="GO:0016887">
    <property type="term" value="F:ATP hydrolysis activity"/>
    <property type="evidence" value="ECO:0007669"/>
    <property type="project" value="InterPro"/>
</dbReference>
<dbReference type="Gene3D" id="3.40.50.300">
    <property type="entry name" value="P-loop containing nucleotide triphosphate hydrolases"/>
    <property type="match status" value="1"/>
</dbReference>
<dbReference type="InterPro" id="IPR003593">
    <property type="entry name" value="AAA+_ATPase"/>
</dbReference>
<dbReference type="InterPro" id="IPR003439">
    <property type="entry name" value="ABC_transporter-like_ATP-bd"/>
</dbReference>
<dbReference type="InterPro" id="IPR017871">
    <property type="entry name" value="ABC_transporter-like_CS"/>
</dbReference>
<dbReference type="InterPro" id="IPR050166">
    <property type="entry name" value="ABC_transporter_ATP-bind"/>
</dbReference>
<dbReference type="InterPro" id="IPR027417">
    <property type="entry name" value="P-loop_NTPase"/>
</dbReference>
<dbReference type="PANTHER" id="PTHR42788:SF17">
    <property type="entry name" value="ALIPHATIC SULFONATES IMPORT ATP-BINDING PROTEIN SSUB"/>
    <property type="match status" value="1"/>
</dbReference>
<dbReference type="PANTHER" id="PTHR42788">
    <property type="entry name" value="TAURINE IMPORT ATP-BINDING PROTEIN-RELATED"/>
    <property type="match status" value="1"/>
</dbReference>
<dbReference type="Pfam" id="PF00005">
    <property type="entry name" value="ABC_tran"/>
    <property type="match status" value="1"/>
</dbReference>
<dbReference type="SMART" id="SM00382">
    <property type="entry name" value="AAA"/>
    <property type="match status" value="1"/>
</dbReference>
<dbReference type="SUPFAM" id="SSF52540">
    <property type="entry name" value="P-loop containing nucleoside triphosphate hydrolases"/>
    <property type="match status" value="1"/>
</dbReference>
<dbReference type="PROSITE" id="PS00211">
    <property type="entry name" value="ABC_TRANSPORTER_1"/>
    <property type="match status" value="1"/>
</dbReference>
<dbReference type="PROSITE" id="PS50893">
    <property type="entry name" value="ABC_TRANSPORTER_2"/>
    <property type="match status" value="1"/>
</dbReference>
<dbReference type="PROSITE" id="PS51291">
    <property type="entry name" value="SSUB"/>
    <property type="match status" value="1"/>
</dbReference>
<protein>
    <recommendedName>
        <fullName evidence="1">Aliphatic sulfonates import ATP-binding protein SsuB</fullName>
        <ecNumber evidence="1">7.6.2.14</ecNumber>
    </recommendedName>
</protein>
<name>SSUB_BURP1</name>
<sequence>MTGTTLAATYGPISGADLEAELAQPRIADGDAQDAAVYERDGGAHAPPFASGGAPPDGDRADVRRAAGAGDASVRLTRVSKRYGERAVLADVDLSIGRGSFVSIVGRSGCGKSTLLRLVAELETPSAGTLVKRGDGGGALDTRIMYQEARLLPWKTVLQNVMLGLGRRAKDDARAVLDEVGLLARANDWPAQLSGGQRQRVALARALVHRPQLLLLDEPLGALDALTRIEMHALIERLWREHRFTALLVTHDVQEAVALADRVLLIEAGRIAFDQRVPLDRPRARASAAFAALEDRVLQRVLTGSDAAPAAPNAAGPEGASRGRAAPASGLRWAV</sequence>
<comment type="function">
    <text evidence="1">Part of the ABC transporter complex SsuABC involved in aliphatic sulfonates import. Responsible for energy coupling to the transport system.</text>
</comment>
<comment type="catalytic activity">
    <reaction evidence="1">
        <text>ATP + H2O + aliphatic sulfonate-[sulfonate-binding protein]Side 1 = ADP + phosphate + aliphatic sulfonateSide 2 + [sulfonate-binding protein]Side 1.</text>
        <dbReference type="EC" id="7.6.2.14"/>
    </reaction>
</comment>
<comment type="subunit">
    <text evidence="1">The complex is composed of two ATP-binding proteins (SsuB), two transmembrane proteins (SsuC) and a solute-binding protein (SsuA).</text>
</comment>
<comment type="subcellular location">
    <subcellularLocation>
        <location evidence="1">Cell inner membrane</location>
        <topology evidence="1">Peripheral membrane protein</topology>
    </subcellularLocation>
</comment>
<comment type="similarity">
    <text evidence="1">Belongs to the ABC transporter superfamily. Aliphatic sulfonates importer (TC 3.A.1.17.2) family.</text>
</comment>
<feature type="chain" id="PRO_0000279902" description="Aliphatic sulfonates import ATP-binding protein SsuB">
    <location>
        <begin position="1"/>
        <end position="335"/>
    </location>
</feature>
<feature type="domain" description="ABC transporter" evidence="1">
    <location>
        <begin position="74"/>
        <end position="293"/>
    </location>
</feature>
<feature type="region of interest" description="Disordered" evidence="2">
    <location>
        <begin position="29"/>
        <end position="61"/>
    </location>
</feature>
<feature type="region of interest" description="Disordered" evidence="2">
    <location>
        <begin position="308"/>
        <end position="335"/>
    </location>
</feature>
<feature type="binding site" evidence="1">
    <location>
        <begin position="106"/>
        <end position="113"/>
    </location>
    <ligand>
        <name>ATP</name>
        <dbReference type="ChEBI" id="CHEBI:30616"/>
    </ligand>
</feature>
<reference key="1">
    <citation type="journal article" date="2010" name="Genome Biol. Evol.">
        <title>Continuing evolution of Burkholderia mallei through genome reduction and large-scale rearrangements.</title>
        <authorList>
            <person name="Losada L."/>
            <person name="Ronning C.M."/>
            <person name="DeShazer D."/>
            <person name="Woods D."/>
            <person name="Fedorova N."/>
            <person name="Kim H.S."/>
            <person name="Shabalina S.A."/>
            <person name="Pearson T.R."/>
            <person name="Brinkac L."/>
            <person name="Tan P."/>
            <person name="Nandi T."/>
            <person name="Crabtree J."/>
            <person name="Badger J."/>
            <person name="Beckstrom-Sternberg S."/>
            <person name="Saqib M."/>
            <person name="Schutzer S.E."/>
            <person name="Keim P."/>
            <person name="Nierman W.C."/>
        </authorList>
    </citation>
    <scope>NUCLEOTIDE SEQUENCE [LARGE SCALE GENOMIC DNA]</scope>
    <source>
        <strain>1710b</strain>
    </source>
</reference>
<proteinExistence type="inferred from homology"/>
<accession>Q3JSR6</accession>
<organism>
    <name type="scientific">Burkholderia pseudomallei (strain 1710b)</name>
    <dbReference type="NCBI Taxonomy" id="320372"/>
    <lineage>
        <taxon>Bacteria</taxon>
        <taxon>Pseudomonadati</taxon>
        <taxon>Pseudomonadota</taxon>
        <taxon>Betaproteobacteria</taxon>
        <taxon>Burkholderiales</taxon>
        <taxon>Burkholderiaceae</taxon>
        <taxon>Burkholderia</taxon>
        <taxon>pseudomallei group</taxon>
    </lineage>
</organism>
<gene>
    <name evidence="1" type="primary">ssuB</name>
    <name type="ordered locus">BURPS1710b_1991</name>
</gene>